<comment type="function">
    <text evidence="4">Phosphodiesterase (PDE) that catalyzes the hydrolysis of cyclic diguanylate (c-di-GMP) to 5'-pGpG.</text>
</comment>
<comment type="catalytic activity">
    <reaction evidence="4">
        <text>3',3'-c-di-GMP + H2O = 5'-phosphoguanylyl(3'-&gt;5')guanosine + H(+)</text>
        <dbReference type="Rhea" id="RHEA:24902"/>
        <dbReference type="ChEBI" id="CHEBI:15377"/>
        <dbReference type="ChEBI" id="CHEBI:15378"/>
        <dbReference type="ChEBI" id="CHEBI:58754"/>
        <dbReference type="ChEBI" id="CHEBI:58805"/>
        <dbReference type="EC" id="3.1.4.52"/>
    </reaction>
</comment>
<comment type="biophysicochemical properties">
    <kinetics>
        <KM evidence="4">5.2 uM for c-di-GMP</KM>
        <text evidence="4">kcat is 0.39 sec(-1).</text>
    </kinetics>
</comment>
<comment type="induction">
    <text evidence="5">Expression is significantly repressed by azithromycin in a time- and dose-dependent manner (PubMed:28579350). Expression is also affected by clarithromycin or erythromycin, but not by josamycin or oleandmycin (PubMed:28579350).</text>
</comment>
<comment type="domain">
    <text evidence="4">The EAL domain contains a functional active site loop (loop 6), which plays crucial roles in stabilizing the overall protein structure and participating in catalysis, and also controls c-di-GMP and Mg(2+) ion binding.</text>
</comment>
<comment type="disruption phenotype">
    <text evidence="5">Deletion of the gene affects both virulence factors and the quorum-sensing system, and significantly decreases total bacteria in a mouse pneumonia model compared to the wild-type strain.</text>
</comment>
<reference key="1">
    <citation type="journal article" date="2000" name="Nature">
        <title>Complete genome sequence of Pseudomonas aeruginosa PAO1, an opportunistic pathogen.</title>
        <authorList>
            <person name="Stover C.K."/>
            <person name="Pham X.-Q.T."/>
            <person name="Erwin A.L."/>
            <person name="Mizoguchi S.D."/>
            <person name="Warrener P."/>
            <person name="Hickey M.J."/>
            <person name="Brinkman F.S.L."/>
            <person name="Hufnagle W.O."/>
            <person name="Kowalik D.J."/>
            <person name="Lagrou M."/>
            <person name="Garber R.L."/>
            <person name="Goltry L."/>
            <person name="Tolentino E."/>
            <person name="Westbrock-Wadman S."/>
            <person name="Yuan Y."/>
            <person name="Brody L.L."/>
            <person name="Coulter S.N."/>
            <person name="Folger K.R."/>
            <person name="Kas A."/>
            <person name="Larbig K."/>
            <person name="Lim R.M."/>
            <person name="Smith K.A."/>
            <person name="Spencer D.H."/>
            <person name="Wong G.K.-S."/>
            <person name="Wu Z."/>
            <person name="Paulsen I.T."/>
            <person name="Reizer J."/>
            <person name="Saier M.H. Jr."/>
            <person name="Hancock R.E.W."/>
            <person name="Lory S."/>
            <person name="Olson M.V."/>
        </authorList>
    </citation>
    <scope>NUCLEOTIDE SEQUENCE [LARGE SCALE GENOMIC DNA]</scope>
    <source>
        <strain>ATCC 15692 / DSM 22644 / CIP 104116 / JCM 14847 / LMG 12228 / 1C / PRS 101 / PAO1</strain>
    </source>
</reference>
<reference key="2">
    <citation type="journal article" date="2009" name="J. Bacteriol.">
        <title>The functional role of a conserved loop in EAL domain-based cyclic di-GMP-specific phosphodiesterase.</title>
        <authorList>
            <person name="Rao F."/>
            <person name="Qi Y."/>
            <person name="Chong H.S."/>
            <person name="Kotaka M."/>
            <person name="Li B."/>
            <person name="Li J."/>
            <person name="Lescar J."/>
            <person name="Tang K."/>
            <person name="Liang Z.X."/>
        </authorList>
    </citation>
    <scope>FUNCTION</scope>
    <scope>CATALYTIC ACTIVITY</scope>
    <scope>BIOPHYSICOCHEMICAL PROPERTIES</scope>
    <scope>DOMAIN</scope>
    <scope>MUTAGENESIS OF GLU-464</scope>
</reference>
<reference key="3">
    <citation type="journal article" date="2017" name="J. Infect. Chemother.">
        <title>Azithromycin modulates 3',5'-cyclic diguanylic acid signaling in Pseudomonas aeruginosa.</title>
        <authorList>
            <person name="Kimura S."/>
            <person name="Mori N."/>
            <person name="Kai T."/>
            <person name="Ishii Y."/>
            <person name="Yamaguchi K."/>
            <person name="Tateda K."/>
        </authorList>
    </citation>
    <scope>INDUCTION</scope>
    <scope>DISRUPTION PHENOTYPE</scope>
    <source>
        <strain>ATCC 15692 / DSM 22644 / CIP 104116 / JCM 14847 / LMG 12228 / 1C / PRS 101 / PAO1</strain>
    </source>
</reference>
<reference evidence="8" key="4">
    <citation type="submission" date="2009-06" db="PDB data bank">
        <title>Northeast Structural Genomics Consortium Target PaR365C.</title>
        <authorList>
            <consortium name="Northeast structural genomics consortium (NESG)"/>
        </authorList>
    </citation>
    <scope>X-RAY CRYSTALLOGRAPHY (1.70 ANGSTROMS) OF 168-334</scope>
</reference>
<sequence length="587" mass="65618">MATPPYPEDEHSRQAYVDQLGLLEEGADEVFEEILAAATSYFQTPIALISILDHQRQWFRASIGLDIRQTPRRDSFCAYAILGKGVFEVADATLDPRFRDNPYVQGEPRIRFYAGAPLATAEGLNLGSLCVIDREPRGPLAERDVAMLEHFARLVMARIHTLRSTNYIDEPTGLYNRLRLQEDVSLRLQRDGALTVIAADLLPLALLNTIIRTLGYPFSNDLMLEARDRIRAELPDFTLYKISPTRFGLLLPRQQQEETESVCLRLLRAFESPVVCRGIPIKANVGLGVLPLADDTLDGDQDWLRLVVSAADDARDRGVGWARYNPPLDQAQQRAFTLLTSLSQAIGTEEGFHLVYQPKIDLPTGRCTGVEALLRWRHPQLGFVSPAEFVPLAEKTALMRPLSDWVLRHAMAQLAQWNARNIPLRLAINVSASDMEDSSFLEEAVRLAKTYDIDLSALELEFTESVLIRDASAVGSVLLRARELGMGIAVDDFGTGYSNWTYLRDLPITAIKLDQSFTRDLAGSPKAQSVTQAVIGLASQLGYRVVAEGIETHDTFHLLQAWGCHEGQGYLIAQPMLPEQLEDWLRR</sequence>
<protein>
    <recommendedName>
        <fullName evidence="6">Cyclic di-GMP phosphodiesterase PA2567</fullName>
        <shortName evidence="6">c-di-GMP PDE</shortName>
        <ecNumber evidence="4">3.1.4.52</ecNumber>
    </recommendedName>
</protein>
<dbReference type="EC" id="3.1.4.52" evidence="4"/>
<dbReference type="EMBL" id="AE004091">
    <property type="protein sequence ID" value="AAG05955.1"/>
    <property type="molecule type" value="Genomic_DNA"/>
</dbReference>
<dbReference type="PIR" id="B83324">
    <property type="entry name" value="B83324"/>
</dbReference>
<dbReference type="RefSeq" id="NP_251257.1">
    <property type="nucleotide sequence ID" value="NC_002516.2"/>
</dbReference>
<dbReference type="RefSeq" id="WP_003113344.1">
    <property type="nucleotide sequence ID" value="NZ_QZGE01000008.1"/>
</dbReference>
<dbReference type="PDB" id="3HVW">
    <property type="method" value="X-ray"/>
    <property type="resolution" value="1.70 A"/>
    <property type="chains" value="A=167-334"/>
</dbReference>
<dbReference type="PDBsum" id="3HVW"/>
<dbReference type="SMR" id="Q9I0R8"/>
<dbReference type="STRING" id="208964.PA2567"/>
<dbReference type="PaxDb" id="208964-PA2567"/>
<dbReference type="DNASU" id="882795"/>
<dbReference type="GeneID" id="882795"/>
<dbReference type="KEGG" id="pae:PA2567"/>
<dbReference type="PATRIC" id="fig|208964.12.peg.2688"/>
<dbReference type="PseudoCAP" id="PA2567"/>
<dbReference type="HOGENOM" id="CLU_000445_70_34_6"/>
<dbReference type="InParanoid" id="Q9I0R8"/>
<dbReference type="OrthoDB" id="9804951at2"/>
<dbReference type="PhylomeDB" id="Q9I0R8"/>
<dbReference type="BioCyc" id="PAER208964:G1FZ6-2603-MONOMER"/>
<dbReference type="EvolutionaryTrace" id="Q9I0R8"/>
<dbReference type="PHI-base" id="PHI:7174"/>
<dbReference type="Proteomes" id="UP000002438">
    <property type="component" value="Chromosome"/>
</dbReference>
<dbReference type="GO" id="GO:0005886">
    <property type="term" value="C:plasma membrane"/>
    <property type="evidence" value="ECO:0000318"/>
    <property type="project" value="GO_Central"/>
</dbReference>
<dbReference type="GO" id="GO:0071111">
    <property type="term" value="F:cyclic-guanylate-specific phosphodiesterase activity"/>
    <property type="evidence" value="ECO:0000318"/>
    <property type="project" value="GO_Central"/>
</dbReference>
<dbReference type="GO" id="GO:1900190">
    <property type="term" value="P:regulation of single-species biofilm formation"/>
    <property type="evidence" value="ECO:0000318"/>
    <property type="project" value="GO_Central"/>
</dbReference>
<dbReference type="CDD" id="cd01948">
    <property type="entry name" value="EAL"/>
    <property type="match status" value="1"/>
</dbReference>
<dbReference type="Gene3D" id="3.30.450.40">
    <property type="match status" value="1"/>
</dbReference>
<dbReference type="Gene3D" id="3.30.70.270">
    <property type="match status" value="1"/>
</dbReference>
<dbReference type="Gene3D" id="3.20.20.450">
    <property type="entry name" value="EAL domain"/>
    <property type="match status" value="1"/>
</dbReference>
<dbReference type="InterPro" id="IPR050706">
    <property type="entry name" value="Cyclic-di-GMP_PDE-like"/>
</dbReference>
<dbReference type="InterPro" id="IPR001633">
    <property type="entry name" value="EAL_dom"/>
</dbReference>
<dbReference type="InterPro" id="IPR035919">
    <property type="entry name" value="EAL_sf"/>
</dbReference>
<dbReference type="InterPro" id="IPR003018">
    <property type="entry name" value="GAF"/>
</dbReference>
<dbReference type="InterPro" id="IPR029016">
    <property type="entry name" value="GAF-like_dom_sf"/>
</dbReference>
<dbReference type="InterPro" id="IPR000160">
    <property type="entry name" value="GGDEF_dom"/>
</dbReference>
<dbReference type="InterPro" id="IPR029787">
    <property type="entry name" value="Nucleotide_cyclase"/>
</dbReference>
<dbReference type="InterPro" id="IPR043128">
    <property type="entry name" value="Rev_trsase/Diguanyl_cyclase"/>
</dbReference>
<dbReference type="PANTHER" id="PTHR33121:SF19">
    <property type="entry name" value="CYCLIC DI-GMP PHOSPHODIESTERASE PA2567"/>
    <property type="match status" value="1"/>
</dbReference>
<dbReference type="PANTHER" id="PTHR33121">
    <property type="entry name" value="CYCLIC DI-GMP PHOSPHODIESTERASE PDEF"/>
    <property type="match status" value="1"/>
</dbReference>
<dbReference type="Pfam" id="PF00563">
    <property type="entry name" value="EAL"/>
    <property type="match status" value="1"/>
</dbReference>
<dbReference type="Pfam" id="PF01590">
    <property type="entry name" value="GAF"/>
    <property type="match status" value="1"/>
</dbReference>
<dbReference type="Pfam" id="PF00990">
    <property type="entry name" value="GGDEF"/>
    <property type="match status" value="1"/>
</dbReference>
<dbReference type="SMART" id="SM00052">
    <property type="entry name" value="EAL"/>
    <property type="match status" value="1"/>
</dbReference>
<dbReference type="SMART" id="SM00065">
    <property type="entry name" value="GAF"/>
    <property type="match status" value="1"/>
</dbReference>
<dbReference type="SMART" id="SM00267">
    <property type="entry name" value="GGDEF"/>
    <property type="match status" value="1"/>
</dbReference>
<dbReference type="SUPFAM" id="SSF141868">
    <property type="entry name" value="EAL domain-like"/>
    <property type="match status" value="1"/>
</dbReference>
<dbReference type="SUPFAM" id="SSF55781">
    <property type="entry name" value="GAF domain-like"/>
    <property type="match status" value="1"/>
</dbReference>
<dbReference type="SUPFAM" id="SSF55073">
    <property type="entry name" value="Nucleotide cyclase"/>
    <property type="match status" value="1"/>
</dbReference>
<dbReference type="PROSITE" id="PS50883">
    <property type="entry name" value="EAL"/>
    <property type="match status" value="1"/>
</dbReference>
<feature type="chain" id="PRO_0000458264" description="Cyclic di-GMP phosphodiesterase PA2567">
    <location>
        <begin position="1"/>
        <end position="587"/>
    </location>
</feature>
<feature type="domain" description="GAF" evidence="1">
    <location>
        <begin position="28"/>
        <end position="157"/>
    </location>
</feature>
<feature type="domain" description="GGDEF" evidence="3">
    <location>
        <begin position="192"/>
        <end position="327"/>
    </location>
</feature>
<feature type="domain" description="EAL" evidence="2">
    <location>
        <begin position="335"/>
        <end position="587"/>
    </location>
</feature>
<feature type="mutagenesis site" description="Does not perturb the oligomeric state and does not affect kcat." evidence="4">
    <original>E</original>
    <variation>A</variation>
    <location>
        <position position="464"/>
    </location>
</feature>
<feature type="helix" evidence="9">
    <location>
        <begin position="177"/>
        <end position="191"/>
    </location>
</feature>
<feature type="strand" evidence="9">
    <location>
        <begin position="192"/>
        <end position="200"/>
    </location>
</feature>
<feature type="helix" evidence="9">
    <location>
        <begin position="204"/>
        <end position="214"/>
    </location>
</feature>
<feature type="helix" evidence="9">
    <location>
        <begin position="216"/>
        <end position="233"/>
    </location>
</feature>
<feature type="strand" evidence="9">
    <location>
        <begin position="239"/>
        <end position="243"/>
    </location>
</feature>
<feature type="strand" evidence="9">
    <location>
        <begin position="246"/>
        <end position="252"/>
    </location>
</feature>
<feature type="helix" evidence="9">
    <location>
        <begin position="253"/>
        <end position="258"/>
    </location>
</feature>
<feature type="helix" evidence="9">
    <location>
        <begin position="259"/>
        <end position="269"/>
    </location>
</feature>
<feature type="strand" evidence="9">
    <location>
        <begin position="274"/>
        <end position="276"/>
    </location>
</feature>
<feature type="strand" evidence="9">
    <location>
        <begin position="279"/>
        <end position="281"/>
    </location>
</feature>
<feature type="strand" evidence="9">
    <location>
        <begin position="286"/>
        <end position="293"/>
    </location>
</feature>
<feature type="helix" evidence="9">
    <location>
        <begin position="294"/>
        <end position="296"/>
    </location>
</feature>
<feature type="helix" evidence="9">
    <location>
        <begin position="298"/>
        <end position="300"/>
    </location>
</feature>
<feature type="helix" evidence="9">
    <location>
        <begin position="304"/>
        <end position="317"/>
    </location>
</feature>
<feature type="turn" evidence="9">
    <location>
        <begin position="330"/>
        <end position="332"/>
    </location>
</feature>
<evidence type="ECO:0000255" key="1"/>
<evidence type="ECO:0000255" key="2">
    <source>
        <dbReference type="PROSITE-ProRule" id="PRU00074"/>
    </source>
</evidence>
<evidence type="ECO:0000255" key="3">
    <source>
        <dbReference type="PROSITE-ProRule" id="PRU00095"/>
    </source>
</evidence>
<evidence type="ECO:0000269" key="4">
    <source>
    </source>
</evidence>
<evidence type="ECO:0000269" key="5">
    <source>
    </source>
</evidence>
<evidence type="ECO:0000305" key="6"/>
<evidence type="ECO:0000312" key="7">
    <source>
        <dbReference type="EMBL" id="AAG05955.1"/>
    </source>
</evidence>
<evidence type="ECO:0007744" key="8">
    <source>
        <dbReference type="PDB" id="3HVW"/>
    </source>
</evidence>
<evidence type="ECO:0007829" key="9">
    <source>
        <dbReference type="PDB" id="3HVW"/>
    </source>
</evidence>
<organism>
    <name type="scientific">Pseudomonas aeruginosa (strain ATCC 15692 / DSM 22644 / CIP 104116 / JCM 14847 / LMG 12228 / 1C / PRS 101 / PAO1)</name>
    <dbReference type="NCBI Taxonomy" id="208964"/>
    <lineage>
        <taxon>Bacteria</taxon>
        <taxon>Pseudomonadati</taxon>
        <taxon>Pseudomonadota</taxon>
        <taxon>Gammaproteobacteria</taxon>
        <taxon>Pseudomonadales</taxon>
        <taxon>Pseudomonadaceae</taxon>
        <taxon>Pseudomonas</taxon>
    </lineage>
</organism>
<keyword id="KW-0002">3D-structure</keyword>
<keyword id="KW-0973">c-di-GMP</keyword>
<keyword id="KW-0378">Hydrolase</keyword>
<keyword id="KW-1185">Reference proteome</keyword>
<name>CDPD3_PSEAE</name>
<proteinExistence type="evidence at protein level"/>
<gene>
    <name evidence="7" type="ordered locus">PA2567</name>
</gene>
<accession>Q9I0R8</accession>